<proteinExistence type="inferred from homology"/>
<feature type="chain" id="PRO_1000115644" description="V-type ATP synthase alpha chain">
    <location>
        <begin position="1"/>
        <end position="591"/>
    </location>
</feature>
<feature type="binding site" evidence="1">
    <location>
        <begin position="233"/>
        <end position="240"/>
    </location>
    <ligand>
        <name>ATP</name>
        <dbReference type="ChEBI" id="CHEBI:30616"/>
    </ligand>
</feature>
<organism>
    <name type="scientific">Streptococcus pneumoniae (strain Hungary19A-6)</name>
    <dbReference type="NCBI Taxonomy" id="487214"/>
    <lineage>
        <taxon>Bacteria</taxon>
        <taxon>Bacillati</taxon>
        <taxon>Bacillota</taxon>
        <taxon>Bacilli</taxon>
        <taxon>Lactobacillales</taxon>
        <taxon>Streptococcaceae</taxon>
        <taxon>Streptococcus</taxon>
    </lineage>
</organism>
<comment type="function">
    <text evidence="1">Produces ATP from ADP in the presence of a proton gradient across the membrane. The V-type alpha chain is a catalytic subunit.</text>
</comment>
<comment type="catalytic activity">
    <reaction evidence="1">
        <text>ATP + H2O + 4 H(+)(in) = ADP + phosphate + 5 H(+)(out)</text>
        <dbReference type="Rhea" id="RHEA:57720"/>
        <dbReference type="ChEBI" id="CHEBI:15377"/>
        <dbReference type="ChEBI" id="CHEBI:15378"/>
        <dbReference type="ChEBI" id="CHEBI:30616"/>
        <dbReference type="ChEBI" id="CHEBI:43474"/>
        <dbReference type="ChEBI" id="CHEBI:456216"/>
        <dbReference type="EC" id="7.1.2.2"/>
    </reaction>
</comment>
<comment type="similarity">
    <text evidence="1">Belongs to the ATPase alpha/beta chains family.</text>
</comment>
<gene>
    <name evidence="1" type="primary">atpA</name>
    <name type="ordered locus">SPH_1459</name>
</gene>
<evidence type="ECO:0000255" key="1">
    <source>
        <dbReference type="HAMAP-Rule" id="MF_00309"/>
    </source>
</evidence>
<accession>B1ICC9</accession>
<dbReference type="EC" id="7.1.2.2" evidence="1"/>
<dbReference type="EMBL" id="CP000936">
    <property type="protein sequence ID" value="ACA36749.1"/>
    <property type="molecule type" value="Genomic_DNA"/>
</dbReference>
<dbReference type="RefSeq" id="WP_000191788.1">
    <property type="nucleotide sequence ID" value="NC_010380.1"/>
</dbReference>
<dbReference type="SMR" id="B1ICC9"/>
<dbReference type="KEGG" id="spv:SPH_1459"/>
<dbReference type="HOGENOM" id="CLU_008162_3_1_9"/>
<dbReference type="Proteomes" id="UP000002163">
    <property type="component" value="Chromosome"/>
</dbReference>
<dbReference type="GO" id="GO:0045259">
    <property type="term" value="C:proton-transporting ATP synthase complex"/>
    <property type="evidence" value="ECO:0007669"/>
    <property type="project" value="UniProtKB-ARBA"/>
</dbReference>
<dbReference type="GO" id="GO:0005524">
    <property type="term" value="F:ATP binding"/>
    <property type="evidence" value="ECO:0007669"/>
    <property type="project" value="UniProtKB-UniRule"/>
</dbReference>
<dbReference type="GO" id="GO:0046933">
    <property type="term" value="F:proton-transporting ATP synthase activity, rotational mechanism"/>
    <property type="evidence" value="ECO:0007669"/>
    <property type="project" value="UniProtKB-UniRule"/>
</dbReference>
<dbReference type="GO" id="GO:0046961">
    <property type="term" value="F:proton-transporting ATPase activity, rotational mechanism"/>
    <property type="evidence" value="ECO:0007669"/>
    <property type="project" value="InterPro"/>
</dbReference>
<dbReference type="GO" id="GO:0042777">
    <property type="term" value="P:proton motive force-driven plasma membrane ATP synthesis"/>
    <property type="evidence" value="ECO:0007669"/>
    <property type="project" value="UniProtKB-UniRule"/>
</dbReference>
<dbReference type="CDD" id="cd18111">
    <property type="entry name" value="ATP-synt_V_A-type_alpha_C"/>
    <property type="match status" value="1"/>
</dbReference>
<dbReference type="CDD" id="cd18119">
    <property type="entry name" value="ATP-synt_V_A-type_alpha_N"/>
    <property type="match status" value="1"/>
</dbReference>
<dbReference type="CDD" id="cd01134">
    <property type="entry name" value="V_A-ATPase_A"/>
    <property type="match status" value="1"/>
</dbReference>
<dbReference type="FunFam" id="2.40.30.20:FF:000002">
    <property type="entry name" value="V-type proton ATPase catalytic subunit A"/>
    <property type="match status" value="1"/>
</dbReference>
<dbReference type="FunFam" id="2.40.50.100:FF:000008">
    <property type="entry name" value="V-type proton ATPase catalytic subunit A"/>
    <property type="match status" value="1"/>
</dbReference>
<dbReference type="Gene3D" id="2.40.30.20">
    <property type="match status" value="1"/>
</dbReference>
<dbReference type="Gene3D" id="2.40.50.100">
    <property type="match status" value="1"/>
</dbReference>
<dbReference type="Gene3D" id="1.10.1140.10">
    <property type="entry name" value="Bovine Mitochondrial F1-atpase, Atp Synthase Beta Chain, Chain D, domain 3"/>
    <property type="match status" value="1"/>
</dbReference>
<dbReference type="Gene3D" id="3.40.50.300">
    <property type="entry name" value="P-loop containing nucleotide triphosphate hydrolases"/>
    <property type="match status" value="1"/>
</dbReference>
<dbReference type="HAMAP" id="MF_00309">
    <property type="entry name" value="ATP_synth_A_arch"/>
    <property type="match status" value="1"/>
</dbReference>
<dbReference type="InterPro" id="IPR055190">
    <property type="entry name" value="ATP-synt_VA_C"/>
</dbReference>
<dbReference type="InterPro" id="IPR031686">
    <property type="entry name" value="ATP-synth_a_Xtn"/>
</dbReference>
<dbReference type="InterPro" id="IPR023366">
    <property type="entry name" value="ATP_synth_asu-like_sf"/>
</dbReference>
<dbReference type="InterPro" id="IPR020003">
    <property type="entry name" value="ATPase_a/bsu_AS"/>
</dbReference>
<dbReference type="InterPro" id="IPR004100">
    <property type="entry name" value="ATPase_F1/V1/A1_a/bsu_N"/>
</dbReference>
<dbReference type="InterPro" id="IPR036121">
    <property type="entry name" value="ATPase_F1/V1/A1_a/bsu_N_sf"/>
</dbReference>
<dbReference type="InterPro" id="IPR000194">
    <property type="entry name" value="ATPase_F1/V1/A1_a/bsu_nucl-bd"/>
</dbReference>
<dbReference type="InterPro" id="IPR024034">
    <property type="entry name" value="ATPase_F1/V1_b/a_C"/>
</dbReference>
<dbReference type="InterPro" id="IPR027417">
    <property type="entry name" value="P-loop_NTPase"/>
</dbReference>
<dbReference type="InterPro" id="IPR022878">
    <property type="entry name" value="V-ATPase_asu"/>
</dbReference>
<dbReference type="NCBIfam" id="NF003220">
    <property type="entry name" value="PRK04192.1"/>
    <property type="match status" value="1"/>
</dbReference>
<dbReference type="PANTHER" id="PTHR43607:SF1">
    <property type="entry name" value="H(+)-TRANSPORTING TWO-SECTOR ATPASE"/>
    <property type="match status" value="1"/>
</dbReference>
<dbReference type="PANTHER" id="PTHR43607">
    <property type="entry name" value="V-TYPE PROTON ATPASE CATALYTIC SUBUNIT A"/>
    <property type="match status" value="1"/>
</dbReference>
<dbReference type="Pfam" id="PF00006">
    <property type="entry name" value="ATP-synt_ab"/>
    <property type="match status" value="1"/>
</dbReference>
<dbReference type="Pfam" id="PF02874">
    <property type="entry name" value="ATP-synt_ab_N"/>
    <property type="match status" value="1"/>
</dbReference>
<dbReference type="Pfam" id="PF16886">
    <property type="entry name" value="ATP-synt_ab_Xtn"/>
    <property type="match status" value="1"/>
</dbReference>
<dbReference type="Pfam" id="PF22919">
    <property type="entry name" value="ATP-synt_VA_C"/>
    <property type="match status" value="1"/>
</dbReference>
<dbReference type="SUPFAM" id="SSF47917">
    <property type="entry name" value="C-terminal domain of alpha and beta subunits of F1 ATP synthase"/>
    <property type="match status" value="1"/>
</dbReference>
<dbReference type="SUPFAM" id="SSF50615">
    <property type="entry name" value="N-terminal domain of alpha and beta subunits of F1 ATP synthase"/>
    <property type="match status" value="1"/>
</dbReference>
<dbReference type="SUPFAM" id="SSF52540">
    <property type="entry name" value="P-loop containing nucleoside triphosphate hydrolases"/>
    <property type="match status" value="1"/>
</dbReference>
<dbReference type="PROSITE" id="PS00152">
    <property type="entry name" value="ATPASE_ALPHA_BETA"/>
    <property type="match status" value="1"/>
</dbReference>
<protein>
    <recommendedName>
        <fullName evidence="1">V-type ATP synthase alpha chain</fullName>
        <ecNumber evidence="1">7.1.2.2</ecNumber>
    </recommendedName>
    <alternativeName>
        <fullName evidence="1">V-ATPase subunit A</fullName>
    </alternativeName>
</protein>
<keyword id="KW-0066">ATP synthesis</keyword>
<keyword id="KW-0067">ATP-binding</keyword>
<keyword id="KW-0375">Hydrogen ion transport</keyword>
<keyword id="KW-0406">Ion transport</keyword>
<keyword id="KW-0547">Nucleotide-binding</keyword>
<keyword id="KW-1278">Translocase</keyword>
<keyword id="KW-0813">Transport</keyword>
<sequence>MTQGKIIKVSGPLVIASGMQEANIQDICRVGKLGLIGEIIEMRRDQASIQVYEETSGLGPGEPVVTTGEPLSVELGPGLISQMFDGIQRPLDRFKLATHNDFLVRGVEVPSLDRDIKWHFDSTISIGQKVSTGDILGTVKETEVVNHKIMVPYGISGEVVSIASGDFTIDEVVYEIKKLDGSFYKGTLMQKWPVRKARPVSKRLIPEEPLITGQRVIDTFFPVTKGGAAAVPGPFGAGKTVVQHQVAKFANVDIVIYVGCGERGNEMTDVLNEFPELIDPNTGQSIMQRTVLIANTSNMPVAAREASIYTGITMAEYFRDMGYSVAIMADSTSRWAEALREMSGRLEEMPGDEGYPAYLGSRIAEYYERAGRSQALGLPEREGTITAIGAVSPPGGDISEPVTQNTLRIVKVFWGLDAPLAQRRHFPAINWLTSYSLYKDSVGTYIDDKEKTDWNSKITRAMNYLQRESSLEEIVRLVGIDSLSENERLTMEIAKQIREDYLQQNAFDSVDTFTSFAKQEAMLSNILTFADQANHALELGSYFTEIIEGTVAVRDRMARSKYVSEDRLDEIKIISNEITHQIQLILETGGL</sequence>
<name>VATA_STRPI</name>
<reference key="1">
    <citation type="journal article" date="2010" name="Genome Biol.">
        <title>Structure and dynamics of the pan-genome of Streptococcus pneumoniae and closely related species.</title>
        <authorList>
            <person name="Donati C."/>
            <person name="Hiller N.L."/>
            <person name="Tettelin H."/>
            <person name="Muzzi A."/>
            <person name="Croucher N.J."/>
            <person name="Angiuoli S.V."/>
            <person name="Oggioni M."/>
            <person name="Dunning Hotopp J.C."/>
            <person name="Hu F.Z."/>
            <person name="Riley D.R."/>
            <person name="Covacci A."/>
            <person name="Mitchell T.J."/>
            <person name="Bentley S.D."/>
            <person name="Kilian M."/>
            <person name="Ehrlich G.D."/>
            <person name="Rappuoli R."/>
            <person name="Moxon E.R."/>
            <person name="Masignani V."/>
        </authorList>
    </citation>
    <scope>NUCLEOTIDE SEQUENCE [LARGE SCALE GENOMIC DNA]</scope>
    <source>
        <strain>Hungary19A-6</strain>
    </source>
</reference>